<reference key="1">
    <citation type="submission" date="2007-09" db="EMBL/GenBank/DDBJ databases">
        <title>Complete genome sequence of Rickettsia canadensis.</title>
        <authorList>
            <person name="Madan A."/>
            <person name="Fahey J."/>
            <person name="Helton E."/>
            <person name="Ketteman M."/>
            <person name="Madan A."/>
            <person name="Rodrigues S."/>
            <person name="Sanchez A."/>
            <person name="Whiting M."/>
            <person name="Dasch G."/>
            <person name="Eremeeva M."/>
        </authorList>
    </citation>
    <scope>NUCLEOTIDE SEQUENCE [LARGE SCALE GENOMIC DNA]</scope>
    <source>
        <strain>McKiel</strain>
    </source>
</reference>
<sequence>MANHSSAKKAARQTVKRTLINKKRSSAIKTFIKKVVNEISLGNKENANLALSVAQSKIMQGVKKNIIKLNTASRKISRLSRQIQSMDKSK</sequence>
<evidence type="ECO:0000255" key="1">
    <source>
        <dbReference type="HAMAP-Rule" id="MF_00500"/>
    </source>
</evidence>
<evidence type="ECO:0000305" key="2"/>
<name>RS20_RICCK</name>
<keyword id="KW-0687">Ribonucleoprotein</keyword>
<keyword id="KW-0689">Ribosomal protein</keyword>
<keyword id="KW-0694">RNA-binding</keyword>
<keyword id="KW-0699">rRNA-binding</keyword>
<protein>
    <recommendedName>
        <fullName evidence="1">Small ribosomal subunit protein bS20</fullName>
    </recommendedName>
    <alternativeName>
        <fullName evidence="2">30S ribosomal protein S20</fullName>
    </alternativeName>
</protein>
<proteinExistence type="inferred from homology"/>
<feature type="chain" id="PRO_1000014643" description="Small ribosomal subunit protein bS20">
    <location>
        <begin position="1"/>
        <end position="90"/>
    </location>
</feature>
<comment type="function">
    <text evidence="1">Binds directly to 16S ribosomal RNA.</text>
</comment>
<comment type="similarity">
    <text evidence="1">Belongs to the bacterial ribosomal protein bS20 family.</text>
</comment>
<accession>A8EZJ0</accession>
<organism>
    <name type="scientific">Rickettsia canadensis (strain McKiel)</name>
    <dbReference type="NCBI Taxonomy" id="293613"/>
    <lineage>
        <taxon>Bacteria</taxon>
        <taxon>Pseudomonadati</taxon>
        <taxon>Pseudomonadota</taxon>
        <taxon>Alphaproteobacteria</taxon>
        <taxon>Rickettsiales</taxon>
        <taxon>Rickettsiaceae</taxon>
        <taxon>Rickettsieae</taxon>
        <taxon>Rickettsia</taxon>
        <taxon>belli group</taxon>
    </lineage>
</organism>
<gene>
    <name evidence="1" type="primary">rpsT</name>
    <name type="ordered locus">A1E_04240</name>
</gene>
<dbReference type="EMBL" id="CP000409">
    <property type="protein sequence ID" value="ABV73773.1"/>
    <property type="molecule type" value="Genomic_DNA"/>
</dbReference>
<dbReference type="RefSeq" id="WP_012148968.1">
    <property type="nucleotide sequence ID" value="NC_009879.1"/>
</dbReference>
<dbReference type="SMR" id="A8EZJ0"/>
<dbReference type="STRING" id="293613.A1E_04240"/>
<dbReference type="KEGG" id="rcm:A1E_04240"/>
<dbReference type="eggNOG" id="COG0268">
    <property type="taxonomic scope" value="Bacteria"/>
</dbReference>
<dbReference type="HOGENOM" id="CLU_160655_3_0_5"/>
<dbReference type="Proteomes" id="UP000007056">
    <property type="component" value="Chromosome"/>
</dbReference>
<dbReference type="GO" id="GO:0015935">
    <property type="term" value="C:small ribosomal subunit"/>
    <property type="evidence" value="ECO:0007669"/>
    <property type="project" value="TreeGrafter"/>
</dbReference>
<dbReference type="GO" id="GO:0070181">
    <property type="term" value="F:small ribosomal subunit rRNA binding"/>
    <property type="evidence" value="ECO:0007669"/>
    <property type="project" value="TreeGrafter"/>
</dbReference>
<dbReference type="GO" id="GO:0003735">
    <property type="term" value="F:structural constituent of ribosome"/>
    <property type="evidence" value="ECO:0007669"/>
    <property type="project" value="InterPro"/>
</dbReference>
<dbReference type="GO" id="GO:0006412">
    <property type="term" value="P:translation"/>
    <property type="evidence" value="ECO:0007669"/>
    <property type="project" value="UniProtKB-UniRule"/>
</dbReference>
<dbReference type="Gene3D" id="1.20.58.110">
    <property type="entry name" value="Ribosomal protein S20"/>
    <property type="match status" value="1"/>
</dbReference>
<dbReference type="HAMAP" id="MF_00500">
    <property type="entry name" value="Ribosomal_bS20"/>
    <property type="match status" value="1"/>
</dbReference>
<dbReference type="InterPro" id="IPR002583">
    <property type="entry name" value="Ribosomal_bS20"/>
</dbReference>
<dbReference type="InterPro" id="IPR036510">
    <property type="entry name" value="Ribosomal_bS20_sf"/>
</dbReference>
<dbReference type="NCBIfam" id="TIGR00029">
    <property type="entry name" value="S20"/>
    <property type="match status" value="1"/>
</dbReference>
<dbReference type="PANTHER" id="PTHR33398">
    <property type="entry name" value="30S RIBOSOMAL PROTEIN S20"/>
    <property type="match status" value="1"/>
</dbReference>
<dbReference type="PANTHER" id="PTHR33398:SF1">
    <property type="entry name" value="SMALL RIBOSOMAL SUBUNIT PROTEIN BS20C"/>
    <property type="match status" value="1"/>
</dbReference>
<dbReference type="Pfam" id="PF01649">
    <property type="entry name" value="Ribosomal_S20p"/>
    <property type="match status" value="1"/>
</dbReference>
<dbReference type="SUPFAM" id="SSF46992">
    <property type="entry name" value="Ribosomal protein S20"/>
    <property type="match status" value="1"/>
</dbReference>